<proteinExistence type="evidence at transcript level"/>
<reference evidence="7" key="1">
    <citation type="journal article" date="1999" name="Cell">
        <title>A novel class of eukaryotic zinc-binding proteins is required for disease resistance signaling in barley and development in C. elegans.</title>
        <authorList>
            <person name="Shirasu K."/>
            <person name="Lahaye T."/>
            <person name="Tan M.-W."/>
            <person name="Zhou F."/>
            <person name="Azevedo C."/>
            <person name="Schulze-Lefert P."/>
        </authorList>
    </citation>
    <scope>NUCLEOTIDE SEQUENCE [MRNA]</scope>
    <scope>FUNCTION</scope>
    <scope>DISRUPTION PHENOTYPE</scope>
</reference>
<reference evidence="8" key="2">
    <citation type="journal article" date="1998" name="Science">
        <title>Genome sequence of the nematode C. elegans: a platform for investigating biology.</title>
        <authorList>
            <consortium name="The C. elegans sequencing consortium"/>
        </authorList>
    </citation>
    <scope>NUCLEOTIDE SEQUENCE [LARGE SCALE GENOMIC DNA]</scope>
    <source>
        <strain evidence="8">Bristol N2</strain>
    </source>
</reference>
<reference evidence="6" key="3">
    <citation type="journal article" date="2020" name="Elife">
        <title>The CHORD protein CHP-1 regulates EGF receptor trafficking and signaling in C. elegans and in human cells.</title>
        <authorList>
            <person name="Haag A."/>
            <person name="Walser M."/>
            <person name="Henggeler A."/>
            <person name="Hajnal A."/>
        </authorList>
    </citation>
    <scope>FUNCTION</scope>
    <scope>DISRUPTION PHENOTYPE</scope>
</reference>
<sequence length="321" mass="36007">MVDESKLQCYHKGCGLLFDPKENDNEACTYHPGGPYFHDAYKIWTCCDKKSTDFGTWMNYKGCTRGKHSNEKPVDIVKVAAVKEIRPEKEEDVIVWKGLNKSGKLDSKDATKRIEQNLNVEVTPGATAAIEKKLKEISEAAQSADIQIGAPCRNNGCSTEFDGSKNKENCQHHPGAAIFHEGMKYWSCCNKKTSNFGAFLEQVGCTSGEHKFRNNEIVSKFREDWFSSNGFVTINVYCRGALPETANIVSDGHTVRVSMKHGFGNASVDLDYDLWDEVIPEESRVVIGERKVEISLKQKHGTGWPRLKFDPELDAKNDEEA</sequence>
<accession>G5EEI8</accession>
<name>CHRD1_CAEEL</name>
<feature type="chain" id="PRO_0000450441" description="Cysteine and histidine-rich domain-containing protein 1">
    <location>
        <begin position="1"/>
        <end position="321"/>
    </location>
</feature>
<feature type="domain" description="CHORD 1" evidence="3">
    <location>
        <begin position="9"/>
        <end position="68"/>
    </location>
</feature>
<feature type="domain" description="CHORD 2" evidence="3">
    <location>
        <begin position="152"/>
        <end position="210"/>
    </location>
</feature>
<feature type="domain" description="CS" evidence="2">
    <location>
        <begin position="218"/>
        <end position="308"/>
    </location>
</feature>
<feature type="binding site" evidence="3">
    <location>
        <position position="9"/>
    </location>
    <ligand>
        <name>Zn(2+)</name>
        <dbReference type="ChEBI" id="CHEBI:29105"/>
        <label>1</label>
    </ligand>
</feature>
<feature type="binding site" evidence="3">
    <location>
        <position position="14"/>
    </location>
    <ligand>
        <name>Zn(2+)</name>
        <dbReference type="ChEBI" id="CHEBI:29105"/>
        <label>1</label>
    </ligand>
</feature>
<feature type="binding site" evidence="3">
    <location>
        <position position="28"/>
    </location>
    <ligand>
        <name>Zn(2+)</name>
        <dbReference type="ChEBI" id="CHEBI:29105"/>
        <label>1</label>
    </ligand>
</feature>
<feature type="binding site" evidence="3">
    <location>
        <position position="31"/>
    </location>
    <ligand>
        <name>Zn(2+)</name>
        <dbReference type="ChEBI" id="CHEBI:29105"/>
        <label>2</label>
    </ligand>
</feature>
<feature type="binding site" evidence="3">
    <location>
        <position position="46"/>
    </location>
    <ligand>
        <name>Zn(2+)</name>
        <dbReference type="ChEBI" id="CHEBI:29105"/>
        <label>2</label>
    </ligand>
</feature>
<feature type="binding site" evidence="3">
    <location>
        <position position="47"/>
    </location>
    <ligand>
        <name>Zn(2+)</name>
        <dbReference type="ChEBI" id="CHEBI:29105"/>
        <label>2</label>
    </ligand>
</feature>
<feature type="binding site" evidence="3">
    <location>
        <position position="63"/>
    </location>
    <ligand>
        <name>Zn(2+)</name>
        <dbReference type="ChEBI" id="CHEBI:29105"/>
        <label>2</label>
    </ligand>
</feature>
<feature type="binding site" evidence="3">
    <location>
        <position position="68"/>
    </location>
    <ligand>
        <name>Zn(2+)</name>
        <dbReference type="ChEBI" id="CHEBI:29105"/>
        <label>1</label>
    </ligand>
</feature>
<feature type="binding site" evidence="3">
    <location>
        <position position="152"/>
    </location>
    <ligand>
        <name>Zn(2+)</name>
        <dbReference type="ChEBI" id="CHEBI:29105"/>
        <label>3</label>
    </ligand>
</feature>
<feature type="binding site" evidence="3">
    <location>
        <position position="157"/>
    </location>
    <ligand>
        <name>Zn(2+)</name>
        <dbReference type="ChEBI" id="CHEBI:29105"/>
        <label>3</label>
    </ligand>
</feature>
<feature type="binding site" evidence="3">
    <location>
        <position position="170"/>
    </location>
    <ligand>
        <name>Zn(2+)</name>
        <dbReference type="ChEBI" id="CHEBI:29105"/>
        <label>3</label>
    </ligand>
</feature>
<feature type="binding site" evidence="3">
    <location>
        <position position="173"/>
    </location>
    <ligand>
        <name>Zn(2+)</name>
        <dbReference type="ChEBI" id="CHEBI:29105"/>
        <label>4</label>
    </ligand>
</feature>
<feature type="binding site" evidence="3">
    <location>
        <position position="188"/>
    </location>
    <ligand>
        <name>Zn(2+)</name>
        <dbReference type="ChEBI" id="CHEBI:29105"/>
        <label>4</label>
    </ligand>
</feature>
<feature type="binding site" evidence="3">
    <location>
        <position position="189"/>
    </location>
    <ligand>
        <name>Zn(2+)</name>
        <dbReference type="ChEBI" id="CHEBI:29105"/>
        <label>4</label>
    </ligand>
</feature>
<feature type="binding site" evidence="3">
    <location>
        <position position="205"/>
    </location>
    <ligand>
        <name>Zn(2+)</name>
        <dbReference type="ChEBI" id="CHEBI:29105"/>
        <label>4</label>
    </ligand>
</feature>
<feature type="binding site" evidence="3">
    <location>
        <position position="210"/>
    </location>
    <ligand>
        <name>Zn(2+)</name>
        <dbReference type="ChEBI" id="CHEBI:29105"/>
        <label>3</label>
    </ligand>
</feature>
<dbReference type="EMBL" id="AF192264">
    <property type="protein sequence ID" value="AAF18435.1"/>
    <property type="molecule type" value="mRNA"/>
</dbReference>
<dbReference type="EMBL" id="BX284601">
    <property type="protein sequence ID" value="CCD66204.1"/>
    <property type="molecule type" value="Genomic_DNA"/>
</dbReference>
<dbReference type="RefSeq" id="NP_491519.1">
    <property type="nucleotide sequence ID" value="NM_059118.7"/>
</dbReference>
<dbReference type="SMR" id="G5EEI8"/>
<dbReference type="FunCoup" id="G5EEI8">
    <property type="interactions" value="1974"/>
</dbReference>
<dbReference type="IntAct" id="G5EEI8">
    <property type="interactions" value="1"/>
</dbReference>
<dbReference type="STRING" id="6239.Y110A7A.13.2"/>
<dbReference type="PaxDb" id="6239-Y110A7A.13"/>
<dbReference type="PeptideAtlas" id="G5EEI8"/>
<dbReference type="EnsemblMetazoa" id="Y110A7A.13.1">
    <property type="protein sequence ID" value="Y110A7A.13.1"/>
    <property type="gene ID" value="WBGene00000502"/>
</dbReference>
<dbReference type="GeneID" id="172138"/>
<dbReference type="KEGG" id="cel:CELE_Y110A7A.13"/>
<dbReference type="AGR" id="WB:WBGene00000502"/>
<dbReference type="CTD" id="172138"/>
<dbReference type="WormBase" id="Y110A7A.13">
    <property type="protein sequence ID" value="CE23244"/>
    <property type="gene ID" value="WBGene00000502"/>
    <property type="gene designation" value="chp-1"/>
</dbReference>
<dbReference type="eggNOG" id="KOG1667">
    <property type="taxonomic scope" value="Eukaryota"/>
</dbReference>
<dbReference type="GeneTree" id="ENSGT00940000159429"/>
<dbReference type="HOGENOM" id="CLU_040079_0_0_1"/>
<dbReference type="InParanoid" id="G5EEI8"/>
<dbReference type="OMA" id="KHRWVAK"/>
<dbReference type="OrthoDB" id="10261079at2759"/>
<dbReference type="PhylomeDB" id="G5EEI8"/>
<dbReference type="PRO" id="PR:G5EEI8"/>
<dbReference type="Proteomes" id="UP000001940">
    <property type="component" value="Chromosome I"/>
</dbReference>
<dbReference type="Bgee" id="WBGene00000502">
    <property type="expression patterns" value="Expressed in germ line (C elegans) and 4 other cell types or tissues"/>
</dbReference>
<dbReference type="GO" id="GO:0008270">
    <property type="term" value="F:zinc ion binding"/>
    <property type="evidence" value="ECO:0000318"/>
    <property type="project" value="GO_Central"/>
</dbReference>
<dbReference type="GO" id="GO:0051298">
    <property type="term" value="P:centrosome duplication"/>
    <property type="evidence" value="ECO:0000318"/>
    <property type="project" value="GO_Central"/>
</dbReference>
<dbReference type="CDD" id="cd06466">
    <property type="entry name" value="p23_CS_SGT1_like"/>
    <property type="match status" value="1"/>
</dbReference>
<dbReference type="Gene3D" id="2.60.40.790">
    <property type="match status" value="1"/>
</dbReference>
<dbReference type="Gene3D" id="4.10.1130.20">
    <property type="match status" value="2"/>
</dbReference>
<dbReference type="InterPro" id="IPR007051">
    <property type="entry name" value="CHORD_dom"/>
</dbReference>
<dbReference type="InterPro" id="IPR039790">
    <property type="entry name" value="CHRD1"/>
</dbReference>
<dbReference type="InterPro" id="IPR007052">
    <property type="entry name" value="CS_dom"/>
</dbReference>
<dbReference type="InterPro" id="IPR008978">
    <property type="entry name" value="HSP20-like_chaperone"/>
</dbReference>
<dbReference type="PANTHER" id="PTHR46983:SF3">
    <property type="entry name" value="CHPADIPLOID STATE MAINTENANCE PROTEIN CHPA"/>
    <property type="match status" value="1"/>
</dbReference>
<dbReference type="PANTHER" id="PTHR46983">
    <property type="entry name" value="CYSTEINE AND HISTIDINE-RICH DOMAIN-CONTAINING PROTEIN 1"/>
    <property type="match status" value="1"/>
</dbReference>
<dbReference type="Pfam" id="PF04968">
    <property type="entry name" value="CHORD"/>
    <property type="match status" value="2"/>
</dbReference>
<dbReference type="Pfam" id="PF04969">
    <property type="entry name" value="CS"/>
    <property type="match status" value="1"/>
</dbReference>
<dbReference type="SUPFAM" id="SSF49764">
    <property type="entry name" value="HSP20-like chaperones"/>
    <property type="match status" value="1"/>
</dbReference>
<dbReference type="PROSITE" id="PS51401">
    <property type="entry name" value="CHORD"/>
    <property type="match status" value="2"/>
</dbReference>
<dbReference type="PROSITE" id="PS51203">
    <property type="entry name" value="CS"/>
    <property type="match status" value="1"/>
</dbReference>
<comment type="function">
    <text evidence="1 4 5">Regulates centrosome duplication (By similarity). Controls the secretion of the tyrosine kinase receptor let-23/EGFR from the endoplasmic reticulum and is required for the localization of let-23/EGFR to the plasma membrane of vulval precursor cells (PubMed:32053105). It thus plays a role in positively regulating let/EGFR signaling, and anchor cell and vulval precursor cell alignment (PubMed:32053105). Plays a role in vulval development and morphogenesis (PubMed:10571178, PubMed:32053105).</text>
</comment>
<comment type="disruption phenotype">
    <text evidence="4 5">RNAi-mediated knockdown results in reduced fertility and in high levels of embryonic lethality with none of the unhatched embryos reaching the comma stage of development (PubMed:10571178). Among the 40% of embryos that hatch, 98% reach adulthood, but have a reduced brood size, and the remaining 2% do not survive beyond the L1 larval stage (PubMed:10571178). Surviving adults have defects in vulval development, whereby 3-5% have a protruding vulva (Pvl) phenotype and 1% have a multivulva (Mvl) phenotype (PubMed:10571178). Occasionally, some adults have one missing gonadal arm, but many adults have defects in the organization of the proximal arm of the gonad, which are filled with smaller cells instead of full sized oocytes (PubMed:10571178). RNAi-mediated knockdown results in reduced plasma membrane localization and increased intracellular accumulation of let-23 in vulval precursor cells P6.p and their descendants (PubMed:32053105). RNAi-mediated knockdown does not affect the membrane localization of lin-12, lin-18 or pat-3 (PubMed:32053105). RNAi-mediated knockdown in vulval precursor cells results in the intracellular accumulation of let-23 in 31% of cases (PubMed:32053105).</text>
</comment>
<organism evidence="8">
    <name type="scientific">Caenorhabditis elegans</name>
    <dbReference type="NCBI Taxonomy" id="6239"/>
    <lineage>
        <taxon>Eukaryota</taxon>
        <taxon>Metazoa</taxon>
        <taxon>Ecdysozoa</taxon>
        <taxon>Nematoda</taxon>
        <taxon>Chromadorea</taxon>
        <taxon>Rhabditida</taxon>
        <taxon>Rhabditina</taxon>
        <taxon>Rhabditomorpha</taxon>
        <taxon>Rhabditoidea</taxon>
        <taxon>Rhabditidae</taxon>
        <taxon>Peloderinae</taxon>
        <taxon>Caenorhabditis</taxon>
    </lineage>
</organism>
<protein>
    <recommendedName>
        <fullName evidence="6">Cysteine and histidine-rich domain-containing protein 1</fullName>
    </recommendedName>
    <alternativeName>
        <fullName evidence="6">CHORD domain-containing protein 1</fullName>
        <shortName evidence="6">CHORD-containing protein 1</shortName>
    </alternativeName>
    <alternativeName>
        <fullName evidence="9">Protein CHORD</fullName>
    </alternativeName>
</protein>
<evidence type="ECO:0000250" key="1">
    <source>
        <dbReference type="UniProtKB" id="Q9D1P4"/>
    </source>
</evidence>
<evidence type="ECO:0000255" key="2">
    <source>
        <dbReference type="PROSITE-ProRule" id="PRU00547"/>
    </source>
</evidence>
<evidence type="ECO:0000255" key="3">
    <source>
        <dbReference type="PROSITE-ProRule" id="PRU00734"/>
    </source>
</evidence>
<evidence type="ECO:0000269" key="4">
    <source>
    </source>
</evidence>
<evidence type="ECO:0000269" key="5">
    <source>
    </source>
</evidence>
<evidence type="ECO:0000305" key="6"/>
<evidence type="ECO:0000312" key="7">
    <source>
        <dbReference type="EMBL" id="AAF18435.1"/>
    </source>
</evidence>
<evidence type="ECO:0000312" key="8">
    <source>
        <dbReference type="Proteomes" id="UP000001940"/>
    </source>
</evidence>
<evidence type="ECO:0000312" key="9">
    <source>
        <dbReference type="WormBase" id="Y110A7A.13"/>
    </source>
</evidence>
<keyword id="KW-0479">Metal-binding</keyword>
<keyword id="KW-1185">Reference proteome</keyword>
<keyword id="KW-0677">Repeat</keyword>
<keyword id="KW-0862">Zinc</keyword>
<gene>
    <name evidence="9" type="primary">chp-1</name>
    <name evidence="9" type="synonym">chp</name>
    <name evidence="9" type="ORF">Y110A7A.13</name>
</gene>